<evidence type="ECO:0000255" key="1">
    <source>
        <dbReference type="HAMAP-Rule" id="MF_01234"/>
    </source>
</evidence>
<comment type="function">
    <text evidence="1">Catalyzes the phosphorylation of N-acetylmannosamine (ManNAc) to ManNAc-6-P.</text>
</comment>
<comment type="catalytic activity">
    <reaction evidence="1">
        <text>an N-acyl-D-mannosamine + ATP = an N-acyl-D-mannosamine 6-phosphate + ADP + H(+)</text>
        <dbReference type="Rhea" id="RHEA:23832"/>
        <dbReference type="ChEBI" id="CHEBI:15378"/>
        <dbReference type="ChEBI" id="CHEBI:16062"/>
        <dbReference type="ChEBI" id="CHEBI:30616"/>
        <dbReference type="ChEBI" id="CHEBI:57666"/>
        <dbReference type="ChEBI" id="CHEBI:456216"/>
        <dbReference type="EC" id="2.7.1.60"/>
    </reaction>
</comment>
<comment type="pathway">
    <text evidence="1">Amino-sugar metabolism; N-acetylneuraminate degradation; D-fructose 6-phosphate from N-acetylneuraminate: step 2/5.</text>
</comment>
<comment type="subunit">
    <text evidence="1">Homodimer.</text>
</comment>
<comment type="similarity">
    <text evidence="1">Belongs to the ROK (NagC/XylR) family. NanK subfamily.</text>
</comment>
<accession>B5R0K9</accession>
<dbReference type="EC" id="2.7.1.60" evidence="1"/>
<dbReference type="EMBL" id="AM933172">
    <property type="protein sequence ID" value="CAR34745.1"/>
    <property type="molecule type" value="Genomic_DNA"/>
</dbReference>
<dbReference type="RefSeq" id="WP_000208970.1">
    <property type="nucleotide sequence ID" value="NC_011294.1"/>
</dbReference>
<dbReference type="SMR" id="B5R0K9"/>
<dbReference type="KEGG" id="set:SEN3169"/>
<dbReference type="HOGENOM" id="CLU_036604_0_4_6"/>
<dbReference type="UniPathway" id="UPA00629">
    <property type="reaction ID" value="UER00681"/>
</dbReference>
<dbReference type="Proteomes" id="UP000000613">
    <property type="component" value="Chromosome"/>
</dbReference>
<dbReference type="GO" id="GO:0005524">
    <property type="term" value="F:ATP binding"/>
    <property type="evidence" value="ECO:0007669"/>
    <property type="project" value="UniProtKB-UniRule"/>
</dbReference>
<dbReference type="GO" id="GO:0009384">
    <property type="term" value="F:N-acylmannosamine kinase activity"/>
    <property type="evidence" value="ECO:0007669"/>
    <property type="project" value="UniProtKB-UniRule"/>
</dbReference>
<dbReference type="GO" id="GO:0008270">
    <property type="term" value="F:zinc ion binding"/>
    <property type="evidence" value="ECO:0007669"/>
    <property type="project" value="UniProtKB-UniRule"/>
</dbReference>
<dbReference type="GO" id="GO:0019262">
    <property type="term" value="P:N-acetylneuraminate catabolic process"/>
    <property type="evidence" value="ECO:0007669"/>
    <property type="project" value="UniProtKB-UniRule"/>
</dbReference>
<dbReference type="FunFam" id="3.30.420.40:FF:000062">
    <property type="entry name" value="N-acetylmannosamine kinase"/>
    <property type="match status" value="1"/>
</dbReference>
<dbReference type="FunFam" id="3.30.420.40:FF:000063">
    <property type="entry name" value="N-acetylmannosamine kinase"/>
    <property type="match status" value="1"/>
</dbReference>
<dbReference type="Gene3D" id="3.30.420.40">
    <property type="match status" value="2"/>
</dbReference>
<dbReference type="HAMAP" id="MF_01234">
    <property type="entry name" value="ManNAc_kinase"/>
    <property type="match status" value="1"/>
</dbReference>
<dbReference type="InterPro" id="IPR043129">
    <property type="entry name" value="ATPase_NBD"/>
</dbReference>
<dbReference type="InterPro" id="IPR023945">
    <property type="entry name" value="ManNAc_kinase_bac"/>
</dbReference>
<dbReference type="InterPro" id="IPR000600">
    <property type="entry name" value="ROK"/>
</dbReference>
<dbReference type="InterPro" id="IPR049874">
    <property type="entry name" value="ROK_cs"/>
</dbReference>
<dbReference type="NCBIfam" id="NF047821">
    <property type="entry name" value="NactlManKinNanK"/>
    <property type="match status" value="1"/>
</dbReference>
<dbReference type="NCBIfam" id="NF003461">
    <property type="entry name" value="PRK05082.1"/>
    <property type="match status" value="1"/>
</dbReference>
<dbReference type="PANTHER" id="PTHR18964:SF169">
    <property type="entry name" value="N-ACETYLMANNOSAMINE KINASE"/>
    <property type="match status" value="1"/>
</dbReference>
<dbReference type="PANTHER" id="PTHR18964">
    <property type="entry name" value="ROK (REPRESSOR, ORF, KINASE) FAMILY"/>
    <property type="match status" value="1"/>
</dbReference>
<dbReference type="Pfam" id="PF00480">
    <property type="entry name" value="ROK"/>
    <property type="match status" value="1"/>
</dbReference>
<dbReference type="SUPFAM" id="SSF53067">
    <property type="entry name" value="Actin-like ATPase domain"/>
    <property type="match status" value="1"/>
</dbReference>
<dbReference type="PROSITE" id="PS01125">
    <property type="entry name" value="ROK"/>
    <property type="match status" value="1"/>
</dbReference>
<keyword id="KW-0067">ATP-binding</keyword>
<keyword id="KW-0119">Carbohydrate metabolism</keyword>
<keyword id="KW-0418">Kinase</keyword>
<keyword id="KW-0479">Metal-binding</keyword>
<keyword id="KW-0547">Nucleotide-binding</keyword>
<keyword id="KW-0808">Transferase</keyword>
<keyword id="KW-0862">Zinc</keyword>
<proteinExistence type="inferred from homology"/>
<sequence length="291" mass="30122">MTTLAIDIGGTKLAAALIDKNLRISQRRELPTPASKTPDALREALKALVEPLRAEARQVAIASTGIIQEGMLLALNPHNLGGLLHFPLVQTLETIAGLPTLAVNDAQAAAWAEYHALPDDIRDMVFITVSTGVGGGVVCDGKLLTGKGGLAGHLGHTLADPHGPVCGCGRVGCVEAIASGRGMAAAARDDLAGCDAKTLFIRAGEGHQQARHLVSQSAQVIARMIADVKATTDCQCVVIGGSVGLAEGYLEQVRAFLMQEPAPYHVALSAARYRHDAGLLGAALLAQGDTL</sequence>
<feature type="chain" id="PRO_1000139690" description="N-acetylmannosamine kinase">
    <location>
        <begin position="1"/>
        <end position="291"/>
    </location>
</feature>
<feature type="binding site" evidence="1">
    <location>
        <begin position="5"/>
        <end position="12"/>
    </location>
    <ligand>
        <name>ATP</name>
        <dbReference type="ChEBI" id="CHEBI:30616"/>
    </ligand>
</feature>
<feature type="binding site" evidence="1">
    <location>
        <begin position="132"/>
        <end position="139"/>
    </location>
    <ligand>
        <name>ATP</name>
        <dbReference type="ChEBI" id="CHEBI:30616"/>
    </ligand>
</feature>
<feature type="binding site" evidence="1">
    <location>
        <position position="156"/>
    </location>
    <ligand>
        <name>Zn(2+)</name>
        <dbReference type="ChEBI" id="CHEBI:29105"/>
    </ligand>
</feature>
<feature type="binding site" evidence="1">
    <location>
        <position position="166"/>
    </location>
    <ligand>
        <name>Zn(2+)</name>
        <dbReference type="ChEBI" id="CHEBI:29105"/>
    </ligand>
</feature>
<feature type="binding site" evidence="1">
    <location>
        <position position="168"/>
    </location>
    <ligand>
        <name>Zn(2+)</name>
        <dbReference type="ChEBI" id="CHEBI:29105"/>
    </ligand>
</feature>
<feature type="binding site" evidence="1">
    <location>
        <position position="173"/>
    </location>
    <ligand>
        <name>Zn(2+)</name>
        <dbReference type="ChEBI" id="CHEBI:29105"/>
    </ligand>
</feature>
<reference key="1">
    <citation type="journal article" date="2008" name="Genome Res.">
        <title>Comparative genome analysis of Salmonella enteritidis PT4 and Salmonella gallinarum 287/91 provides insights into evolutionary and host adaptation pathways.</title>
        <authorList>
            <person name="Thomson N.R."/>
            <person name="Clayton D.J."/>
            <person name="Windhorst D."/>
            <person name="Vernikos G."/>
            <person name="Davidson S."/>
            <person name="Churcher C."/>
            <person name="Quail M.A."/>
            <person name="Stevens M."/>
            <person name="Jones M.A."/>
            <person name="Watson M."/>
            <person name="Barron A."/>
            <person name="Layton A."/>
            <person name="Pickard D."/>
            <person name="Kingsley R.A."/>
            <person name="Bignell A."/>
            <person name="Clark L."/>
            <person name="Harris B."/>
            <person name="Ormond D."/>
            <person name="Abdellah Z."/>
            <person name="Brooks K."/>
            <person name="Cherevach I."/>
            <person name="Chillingworth T."/>
            <person name="Woodward J."/>
            <person name="Norberczak H."/>
            <person name="Lord A."/>
            <person name="Arrowsmith C."/>
            <person name="Jagels K."/>
            <person name="Moule S."/>
            <person name="Mungall K."/>
            <person name="Saunders M."/>
            <person name="Whitehead S."/>
            <person name="Chabalgoity J.A."/>
            <person name="Maskell D."/>
            <person name="Humphreys T."/>
            <person name="Roberts M."/>
            <person name="Barrow P.A."/>
            <person name="Dougan G."/>
            <person name="Parkhill J."/>
        </authorList>
    </citation>
    <scope>NUCLEOTIDE SEQUENCE [LARGE SCALE GENOMIC DNA]</scope>
    <source>
        <strain>P125109</strain>
    </source>
</reference>
<gene>
    <name evidence="1" type="primary">nanK</name>
    <name type="ordered locus">SEN3169</name>
</gene>
<name>NANK_SALEP</name>
<organism>
    <name type="scientific">Salmonella enteritidis PT4 (strain P125109)</name>
    <dbReference type="NCBI Taxonomy" id="550537"/>
    <lineage>
        <taxon>Bacteria</taxon>
        <taxon>Pseudomonadati</taxon>
        <taxon>Pseudomonadota</taxon>
        <taxon>Gammaproteobacteria</taxon>
        <taxon>Enterobacterales</taxon>
        <taxon>Enterobacteriaceae</taxon>
        <taxon>Salmonella</taxon>
    </lineage>
</organism>
<protein>
    <recommendedName>
        <fullName evidence="1">N-acetylmannosamine kinase</fullName>
        <ecNumber evidence="1">2.7.1.60</ecNumber>
    </recommendedName>
    <alternativeName>
        <fullName evidence="1">ManNAc kinase</fullName>
    </alternativeName>
    <alternativeName>
        <fullName evidence="1">N-acetyl-D-mannosamine kinase</fullName>
    </alternativeName>
</protein>